<reference key="1">
    <citation type="journal article" date="1993" name="Mol. Gen. Genet.">
        <title>SecA is plastid-encoded in a red alga: implications for the evolution of plastid genomes and the thylakoid protein import apparatus.</title>
        <authorList>
            <person name="Valentin K.-U."/>
        </authorList>
    </citation>
    <scope>NUCLEOTIDE SEQUENCE [GENOMIC DNA]</scope>
</reference>
<gene>
    <name type="primary">ycf21</name>
</gene>
<proteinExistence type="inferred from homology"/>
<comment type="subcellular location">
    <subcellularLocation>
        <location>Plastid</location>
        <location>Chloroplast</location>
    </subcellularLocation>
</comment>
<comment type="similarity">
    <text evidence="1">Belongs to the ycf21 family.</text>
</comment>
<sequence length="179" mass="21400">MNIQLIKNFNPILKINTQSSNIKLNKIIPNEWLFILMNTGSFTQNLNSLLISDININISQKYNYNQPQQFHNTRTVWLANNNNQRFAFAQSRWIIKNNYTNYLNLLNNKPIGKSFIINETDLHKKIEEIYCGHSYILEKNFQSQQLIWGRKYTLLYNKKSFIVIQEYFSPNLTKFLKFH</sequence>
<geneLocation type="chloroplast"/>
<protein>
    <recommendedName>
        <fullName>Uncharacterized protein ycf21</fullName>
    </recommendedName>
</protein>
<organism>
    <name type="scientific">Antithamnion sp.</name>
    <name type="common">Red alga</name>
    <dbReference type="NCBI Taxonomy" id="2767"/>
    <lineage>
        <taxon>Eukaryota</taxon>
        <taxon>Rhodophyta</taxon>
        <taxon>Florideophyceae</taxon>
        <taxon>Rhodymeniophycidae</taxon>
        <taxon>Ceramiales</taxon>
        <taxon>Ceramiaceae</taxon>
        <taxon>Antithamnion</taxon>
    </lineage>
</organism>
<name>YCF21_ANTSP</name>
<accession>Q06463</accession>
<feature type="chain" id="PRO_0000217331" description="Uncharacterized protein ycf21">
    <location>
        <begin position="1"/>
        <end position="179"/>
    </location>
</feature>
<dbReference type="EMBL" id="X64705">
    <property type="protein sequence ID" value="CAA45960.1"/>
    <property type="molecule type" value="Genomic_DNA"/>
</dbReference>
<dbReference type="PIR" id="S42706">
    <property type="entry name" value="S42706"/>
</dbReference>
<dbReference type="SMR" id="Q06463"/>
<dbReference type="GO" id="GO:0009507">
    <property type="term" value="C:chloroplast"/>
    <property type="evidence" value="ECO:0007669"/>
    <property type="project" value="UniProtKB-SubCell"/>
</dbReference>
<dbReference type="Gene3D" id="3.40.1410.10">
    <property type="entry name" value="Chorismate lyase-like"/>
    <property type="match status" value="1"/>
</dbReference>
<dbReference type="InterPro" id="IPR028978">
    <property type="entry name" value="Chorismate_lyase_/UTRA_dom_sf"/>
</dbReference>
<dbReference type="InterPro" id="IPR002800">
    <property type="entry name" value="Rv2949c-like"/>
</dbReference>
<dbReference type="Pfam" id="PF01947">
    <property type="entry name" value="Rv2949c-like"/>
    <property type="match status" value="1"/>
</dbReference>
<dbReference type="SUPFAM" id="SSF64288">
    <property type="entry name" value="Chorismate lyase-like"/>
    <property type="match status" value="1"/>
</dbReference>
<evidence type="ECO:0000305" key="1"/>
<keyword id="KW-0150">Chloroplast</keyword>
<keyword id="KW-0934">Plastid</keyword>